<comment type="function">
    <text evidence="1">Extracellular aminopeptidase that allows assimilation of proteinaceous substrates.</text>
</comment>
<comment type="cofactor">
    <cofactor evidence="1">
        <name>Zn(2+)</name>
        <dbReference type="ChEBI" id="CHEBI:29105"/>
    </cofactor>
    <text evidence="1">Binds 2 Zn(2+) ions per subunit.</text>
</comment>
<comment type="subunit">
    <text evidence="1">Monomer.</text>
</comment>
<comment type="subcellular location">
    <subcellularLocation>
        <location evidence="1">Secreted</location>
    </subcellularLocation>
</comment>
<comment type="similarity">
    <text evidence="3">Belongs to the peptidase M28 family. M28E subfamily.</text>
</comment>
<reference key="1">
    <citation type="submission" date="2010-03" db="EMBL/GenBank/DDBJ databases">
        <title>The genome sequence of Coccidioides posadasii strain Silveira.</title>
        <authorList>
            <consortium name="The Broad Institute Genome Sequencing Center for Infectious Disease"/>
            <person name="Neafsey D."/>
            <person name="Orbach M."/>
            <person name="Henn M.R."/>
            <person name="Cole G.T."/>
            <person name="Galgiani J."/>
            <person name="Gardner M.J."/>
            <person name="Kirkland T.N."/>
            <person name="Taylor J.W."/>
            <person name="Young S.K."/>
            <person name="Zeng Q."/>
            <person name="Koehrsen M."/>
            <person name="Alvarado L."/>
            <person name="Berlin A."/>
            <person name="Borenstein D."/>
            <person name="Chapman S.B."/>
            <person name="Chen Z."/>
            <person name="Engels R."/>
            <person name="Freedman E."/>
            <person name="Gellesch M."/>
            <person name="Goldberg J."/>
            <person name="Griggs A."/>
            <person name="Gujja S."/>
            <person name="Heilman E."/>
            <person name="Heiman D."/>
            <person name="Howarth C."/>
            <person name="Jen D."/>
            <person name="Larson L."/>
            <person name="Mehta T."/>
            <person name="Neiman D."/>
            <person name="Park D."/>
            <person name="Pearson M."/>
            <person name="Richards J."/>
            <person name="Roberts A."/>
            <person name="Saif S."/>
            <person name="Shea T."/>
            <person name="Shenoy N."/>
            <person name="Sisk P."/>
            <person name="Stolte C."/>
            <person name="Sykes S."/>
            <person name="Walk T."/>
            <person name="White J."/>
            <person name="Yandava C."/>
            <person name="Haas B."/>
            <person name="Nusbaum C."/>
            <person name="Birren B."/>
        </authorList>
    </citation>
    <scope>NUCLEOTIDE SEQUENCE [LARGE SCALE GENOMIC DNA]</scope>
    <source>
        <strain>RMSCC 757 / Silveira</strain>
    </source>
</reference>
<dbReference type="EC" id="3.4.11.-"/>
<dbReference type="EMBL" id="GL636498">
    <property type="protein sequence ID" value="EFW16261.1"/>
    <property type="molecule type" value="Genomic_DNA"/>
</dbReference>
<dbReference type="SMR" id="E9DBV9"/>
<dbReference type="STRING" id="443226.E9DBV9"/>
<dbReference type="MEROPS" id="M28.022"/>
<dbReference type="GlyCosmos" id="E9DBV9">
    <property type="glycosylation" value="1 site, No reported glycans"/>
</dbReference>
<dbReference type="VEuPathDB" id="FungiDB:CPSG_07311"/>
<dbReference type="VEuPathDB" id="FungiDB:D8B26_006045"/>
<dbReference type="eggNOG" id="KOG2195">
    <property type="taxonomic scope" value="Eukaryota"/>
</dbReference>
<dbReference type="HOGENOM" id="CLU_025866_0_0_1"/>
<dbReference type="OMA" id="GMLQQDM"/>
<dbReference type="OrthoDB" id="25585at33183"/>
<dbReference type="Proteomes" id="UP000002497">
    <property type="component" value="Unassembled WGS sequence"/>
</dbReference>
<dbReference type="GO" id="GO:0005576">
    <property type="term" value="C:extracellular region"/>
    <property type="evidence" value="ECO:0007669"/>
    <property type="project" value="UniProtKB-SubCell"/>
</dbReference>
<dbReference type="GO" id="GO:0004177">
    <property type="term" value="F:aminopeptidase activity"/>
    <property type="evidence" value="ECO:0007669"/>
    <property type="project" value="UniProtKB-KW"/>
</dbReference>
<dbReference type="GO" id="GO:0046872">
    <property type="term" value="F:metal ion binding"/>
    <property type="evidence" value="ECO:0007669"/>
    <property type="project" value="UniProtKB-KW"/>
</dbReference>
<dbReference type="GO" id="GO:0008235">
    <property type="term" value="F:metalloexopeptidase activity"/>
    <property type="evidence" value="ECO:0007669"/>
    <property type="project" value="InterPro"/>
</dbReference>
<dbReference type="GO" id="GO:0006508">
    <property type="term" value="P:proteolysis"/>
    <property type="evidence" value="ECO:0007669"/>
    <property type="project" value="UniProtKB-KW"/>
</dbReference>
<dbReference type="CDD" id="cd03879">
    <property type="entry name" value="M28_AAP"/>
    <property type="match status" value="1"/>
</dbReference>
<dbReference type="FunFam" id="3.40.630.10:FF:000042">
    <property type="entry name" value="Peptide hydrolase"/>
    <property type="match status" value="1"/>
</dbReference>
<dbReference type="Gene3D" id="3.40.630.10">
    <property type="entry name" value="Zn peptidases"/>
    <property type="match status" value="1"/>
</dbReference>
<dbReference type="InterPro" id="IPR045175">
    <property type="entry name" value="M28_fam"/>
</dbReference>
<dbReference type="InterPro" id="IPR007484">
    <property type="entry name" value="Peptidase_M28"/>
</dbReference>
<dbReference type="PANTHER" id="PTHR12147:SF56">
    <property type="entry name" value="AMINOPEPTIDASE YDR415C-RELATED"/>
    <property type="match status" value="1"/>
</dbReference>
<dbReference type="PANTHER" id="PTHR12147">
    <property type="entry name" value="METALLOPEPTIDASE M28 FAMILY MEMBER"/>
    <property type="match status" value="1"/>
</dbReference>
<dbReference type="Pfam" id="PF04389">
    <property type="entry name" value="Peptidase_M28"/>
    <property type="match status" value="1"/>
</dbReference>
<dbReference type="SUPFAM" id="SSF53187">
    <property type="entry name" value="Zn-dependent exopeptidases"/>
    <property type="match status" value="1"/>
</dbReference>
<gene>
    <name type="primary">LAP1</name>
    <name type="ORF">CPSG_07311</name>
</gene>
<evidence type="ECO:0000250" key="1"/>
<evidence type="ECO:0000255" key="2"/>
<evidence type="ECO:0000305" key="3"/>
<feature type="signal peptide" evidence="2">
    <location>
        <begin position="1"/>
        <end position="19"/>
    </location>
</feature>
<feature type="propeptide" id="PRO_0000412403" evidence="1">
    <location>
        <begin position="20"/>
        <end position="88"/>
    </location>
</feature>
<feature type="chain" id="PRO_0000412404" description="Leucine aminopeptidase 1">
    <location>
        <begin position="89"/>
        <end position="388"/>
    </location>
</feature>
<feature type="binding site" evidence="1">
    <location>
        <position position="188"/>
    </location>
    <ligand>
        <name>Zn(2+)</name>
        <dbReference type="ChEBI" id="CHEBI:29105"/>
        <label>1</label>
    </ligand>
</feature>
<feature type="binding site" evidence="1">
    <location>
        <position position="207"/>
    </location>
    <ligand>
        <name>Zn(2+)</name>
        <dbReference type="ChEBI" id="CHEBI:29105"/>
        <label>1</label>
    </ligand>
</feature>
<feature type="binding site" evidence="1">
    <location>
        <position position="207"/>
    </location>
    <ligand>
        <name>Zn(2+)</name>
        <dbReference type="ChEBI" id="CHEBI:29105"/>
        <label>2</label>
        <note>catalytic</note>
    </ligand>
</feature>
<feature type="binding site" evidence="1">
    <location>
        <position position="246"/>
    </location>
    <ligand>
        <name>Zn(2+)</name>
        <dbReference type="ChEBI" id="CHEBI:29105"/>
        <label>2</label>
        <note>catalytic</note>
    </ligand>
</feature>
<feature type="binding site" evidence="1">
    <location>
        <position position="273"/>
    </location>
    <ligand>
        <name>Zn(2+)</name>
        <dbReference type="ChEBI" id="CHEBI:29105"/>
        <label>1</label>
    </ligand>
</feature>
<feature type="binding site" evidence="1">
    <location>
        <position position="355"/>
    </location>
    <ligand>
        <name>Zn(2+)</name>
        <dbReference type="ChEBI" id="CHEBI:29105"/>
        <label>2</label>
        <note>catalytic</note>
    </ligand>
</feature>
<feature type="glycosylation site" description="N-linked (GlcNAc...) asparagine" evidence="2">
    <location>
        <position position="180"/>
    </location>
</feature>
<feature type="disulfide bond" evidence="1">
    <location>
        <begin position="322"/>
        <end position="326"/>
    </location>
</feature>
<sequence>MKSLSLLALAAIAPPAAVAAVVDHQVPFENRPVQGLPEKFLIQLGPEQTRWVTEDEKWALKMEGVNFFDITAEPDRGFSVKSHERIQVSFPSEVKHQTELAPLLEQLSKDNMRQNLVHFTSFHTRYYKSETGVQSATWLFEQVEEAIQDSGAAQHAVKVERFEHSWGQFSIIATIPGRTNKTVVIGAHQDSINLFLPSILPAPGADDDGSGTVTILEAFRVLLQSEAVQQGNAANTIEFHWYSAEEAGLLGSQAIFSDYSKTGRDIKAMLQQDMTGYVEGTTKAGEVESVGVITDFVDPGLTEFIKRVITGYCTIPFVLTQCGYACSDHASASRYGYPSAFVIESEFKRSNQRIHTTGDTVDLLSFDHMLQHARMTLAFAYELAFAEL</sequence>
<protein>
    <recommendedName>
        <fullName>Leucine aminopeptidase 1</fullName>
        <ecNumber>3.4.11.-</ecNumber>
    </recommendedName>
    <alternativeName>
        <fullName>Leucyl aminopeptidase 1</fullName>
        <shortName>LAP1</shortName>
    </alternativeName>
</protein>
<organism>
    <name type="scientific">Coccidioides posadasii (strain RMSCC 757 / Silveira)</name>
    <name type="common">Valley fever fungus</name>
    <dbReference type="NCBI Taxonomy" id="443226"/>
    <lineage>
        <taxon>Eukaryota</taxon>
        <taxon>Fungi</taxon>
        <taxon>Dikarya</taxon>
        <taxon>Ascomycota</taxon>
        <taxon>Pezizomycotina</taxon>
        <taxon>Eurotiomycetes</taxon>
        <taxon>Eurotiomycetidae</taxon>
        <taxon>Onygenales</taxon>
        <taxon>Onygenaceae</taxon>
        <taxon>Coccidioides</taxon>
    </lineage>
</organism>
<name>LAP1_COCPS</name>
<keyword id="KW-0031">Aminopeptidase</keyword>
<keyword id="KW-1015">Disulfide bond</keyword>
<keyword id="KW-0325">Glycoprotein</keyword>
<keyword id="KW-0378">Hydrolase</keyword>
<keyword id="KW-0479">Metal-binding</keyword>
<keyword id="KW-0645">Protease</keyword>
<keyword id="KW-1185">Reference proteome</keyword>
<keyword id="KW-0964">Secreted</keyword>
<keyword id="KW-0732">Signal</keyword>
<keyword id="KW-0862">Zinc</keyword>
<keyword id="KW-0865">Zymogen</keyword>
<proteinExistence type="inferred from homology"/>
<accession>E9DBV9</accession>